<proteinExistence type="inferred from homology"/>
<dbReference type="EC" id="1.8.4.11" evidence="1"/>
<dbReference type="EMBL" id="CP000885">
    <property type="protein sequence ID" value="ABX41876.1"/>
    <property type="molecule type" value="Genomic_DNA"/>
</dbReference>
<dbReference type="RefSeq" id="WP_012199530.1">
    <property type="nucleotide sequence ID" value="NC_010001.1"/>
</dbReference>
<dbReference type="SMR" id="A9KPX7"/>
<dbReference type="STRING" id="357809.Cphy_1502"/>
<dbReference type="KEGG" id="cpy:Cphy_1502"/>
<dbReference type="eggNOG" id="COG0225">
    <property type="taxonomic scope" value="Bacteria"/>
</dbReference>
<dbReference type="HOGENOM" id="CLU_031040_10_2_9"/>
<dbReference type="OrthoDB" id="4174719at2"/>
<dbReference type="Proteomes" id="UP000000370">
    <property type="component" value="Chromosome"/>
</dbReference>
<dbReference type="GO" id="GO:0005737">
    <property type="term" value="C:cytoplasm"/>
    <property type="evidence" value="ECO:0007669"/>
    <property type="project" value="TreeGrafter"/>
</dbReference>
<dbReference type="GO" id="GO:0036456">
    <property type="term" value="F:L-methionine-(S)-S-oxide reductase activity"/>
    <property type="evidence" value="ECO:0007669"/>
    <property type="project" value="TreeGrafter"/>
</dbReference>
<dbReference type="GO" id="GO:0008113">
    <property type="term" value="F:peptide-methionine (S)-S-oxide reductase activity"/>
    <property type="evidence" value="ECO:0007669"/>
    <property type="project" value="UniProtKB-UniRule"/>
</dbReference>
<dbReference type="GO" id="GO:0034599">
    <property type="term" value="P:cellular response to oxidative stress"/>
    <property type="evidence" value="ECO:0007669"/>
    <property type="project" value="TreeGrafter"/>
</dbReference>
<dbReference type="GO" id="GO:0036211">
    <property type="term" value="P:protein modification process"/>
    <property type="evidence" value="ECO:0007669"/>
    <property type="project" value="UniProtKB-UniRule"/>
</dbReference>
<dbReference type="Gene3D" id="3.30.1060.10">
    <property type="entry name" value="Peptide methionine sulphoxide reductase MsrA"/>
    <property type="match status" value="1"/>
</dbReference>
<dbReference type="HAMAP" id="MF_01401">
    <property type="entry name" value="MsrA"/>
    <property type="match status" value="1"/>
</dbReference>
<dbReference type="InterPro" id="IPR002569">
    <property type="entry name" value="Met_Sox_Rdtase_MsrA_dom"/>
</dbReference>
<dbReference type="InterPro" id="IPR036509">
    <property type="entry name" value="Met_Sox_Rdtase_MsrA_sf"/>
</dbReference>
<dbReference type="InterPro" id="IPR050162">
    <property type="entry name" value="MsrA_MetSO_reductase"/>
</dbReference>
<dbReference type="NCBIfam" id="TIGR00401">
    <property type="entry name" value="msrA"/>
    <property type="match status" value="1"/>
</dbReference>
<dbReference type="PANTHER" id="PTHR42799">
    <property type="entry name" value="MITOCHONDRIAL PEPTIDE METHIONINE SULFOXIDE REDUCTASE"/>
    <property type="match status" value="1"/>
</dbReference>
<dbReference type="PANTHER" id="PTHR42799:SF2">
    <property type="entry name" value="MITOCHONDRIAL PEPTIDE METHIONINE SULFOXIDE REDUCTASE"/>
    <property type="match status" value="1"/>
</dbReference>
<dbReference type="Pfam" id="PF01625">
    <property type="entry name" value="PMSR"/>
    <property type="match status" value="1"/>
</dbReference>
<dbReference type="SUPFAM" id="SSF55068">
    <property type="entry name" value="Peptide methionine sulfoxide reductase"/>
    <property type="match status" value="1"/>
</dbReference>
<gene>
    <name evidence="1" type="primary">msrA</name>
    <name type="ordered locus">Cphy_1502</name>
</gene>
<name>MSRA_LACP7</name>
<accession>A9KPX7</accession>
<feature type="chain" id="PRO_1000145397" description="Peptide methionine sulfoxide reductase MsrA">
    <location>
        <begin position="1"/>
        <end position="166"/>
    </location>
</feature>
<feature type="active site" evidence="1">
    <location>
        <position position="11"/>
    </location>
</feature>
<sequence length="166" mass="18816">MNKTIYIAAGCFWGGEKYFSLIHGVLSTKVGYANGTTSNPTYEEVCHNNTGHAETVEIQYDDSILPLEKLLRLYYEVIDPTSVNKQGGDQGIQYRTGIYYIDEADLEIIKPSLEELAKKYDKPIAIEVKQLLHFYDAEEYHQKYLDKNPSGYCHIGQCAFDSAKNA</sequence>
<protein>
    <recommendedName>
        <fullName evidence="1">Peptide methionine sulfoxide reductase MsrA</fullName>
        <shortName evidence="1">Protein-methionine-S-oxide reductase</shortName>
        <ecNumber evidence="1">1.8.4.11</ecNumber>
    </recommendedName>
    <alternativeName>
        <fullName evidence="1">Peptide-methionine (S)-S-oxide reductase</fullName>
        <shortName evidence="1">Peptide Met(O) reductase</shortName>
    </alternativeName>
</protein>
<organism>
    <name type="scientific">Lachnoclostridium phytofermentans (strain ATCC 700394 / DSM 18823 / ISDg)</name>
    <name type="common">Clostridium phytofermentans</name>
    <dbReference type="NCBI Taxonomy" id="357809"/>
    <lineage>
        <taxon>Bacteria</taxon>
        <taxon>Bacillati</taxon>
        <taxon>Bacillota</taxon>
        <taxon>Clostridia</taxon>
        <taxon>Lachnospirales</taxon>
        <taxon>Lachnospiraceae</taxon>
    </lineage>
</organism>
<reference key="1">
    <citation type="submission" date="2007-11" db="EMBL/GenBank/DDBJ databases">
        <title>Complete genome sequence of Clostridium phytofermentans ISDg.</title>
        <authorList>
            <person name="Leschine S.B."/>
            <person name="Warnick T.A."/>
            <person name="Blanchard J.L."/>
            <person name="Schnell D.J."/>
            <person name="Petit E.L."/>
            <person name="LaTouf W.G."/>
            <person name="Copeland A."/>
            <person name="Lucas S."/>
            <person name="Lapidus A."/>
            <person name="Barry K."/>
            <person name="Glavina del Rio T."/>
            <person name="Dalin E."/>
            <person name="Tice H."/>
            <person name="Pitluck S."/>
            <person name="Kiss H."/>
            <person name="Brettin T."/>
            <person name="Bruce D."/>
            <person name="Detter J.C."/>
            <person name="Han C."/>
            <person name="Kuske C."/>
            <person name="Schmutz J."/>
            <person name="Larimer F."/>
            <person name="Land M."/>
            <person name="Hauser L."/>
            <person name="Kyrpides N."/>
            <person name="Kim E.A."/>
            <person name="Richardson P."/>
        </authorList>
    </citation>
    <scope>NUCLEOTIDE SEQUENCE [LARGE SCALE GENOMIC DNA]</scope>
    <source>
        <strain>ATCC 700394 / DSM 18823 / ISDg</strain>
    </source>
</reference>
<keyword id="KW-0560">Oxidoreductase</keyword>
<keyword id="KW-1185">Reference proteome</keyword>
<evidence type="ECO:0000255" key="1">
    <source>
        <dbReference type="HAMAP-Rule" id="MF_01401"/>
    </source>
</evidence>
<comment type="function">
    <text evidence="1">Has an important function as a repair enzyme for proteins that have been inactivated by oxidation. Catalyzes the reversible oxidation-reduction of methionine sulfoxide in proteins to methionine.</text>
</comment>
<comment type="catalytic activity">
    <reaction evidence="1">
        <text>L-methionyl-[protein] + [thioredoxin]-disulfide + H2O = L-methionyl-(S)-S-oxide-[protein] + [thioredoxin]-dithiol</text>
        <dbReference type="Rhea" id="RHEA:14217"/>
        <dbReference type="Rhea" id="RHEA-COMP:10698"/>
        <dbReference type="Rhea" id="RHEA-COMP:10700"/>
        <dbReference type="Rhea" id="RHEA-COMP:12313"/>
        <dbReference type="Rhea" id="RHEA-COMP:12315"/>
        <dbReference type="ChEBI" id="CHEBI:15377"/>
        <dbReference type="ChEBI" id="CHEBI:16044"/>
        <dbReference type="ChEBI" id="CHEBI:29950"/>
        <dbReference type="ChEBI" id="CHEBI:44120"/>
        <dbReference type="ChEBI" id="CHEBI:50058"/>
        <dbReference type="EC" id="1.8.4.11"/>
    </reaction>
</comment>
<comment type="catalytic activity">
    <reaction evidence="1">
        <text>[thioredoxin]-disulfide + L-methionine + H2O = L-methionine (S)-S-oxide + [thioredoxin]-dithiol</text>
        <dbReference type="Rhea" id="RHEA:19993"/>
        <dbReference type="Rhea" id="RHEA-COMP:10698"/>
        <dbReference type="Rhea" id="RHEA-COMP:10700"/>
        <dbReference type="ChEBI" id="CHEBI:15377"/>
        <dbReference type="ChEBI" id="CHEBI:29950"/>
        <dbReference type="ChEBI" id="CHEBI:50058"/>
        <dbReference type="ChEBI" id="CHEBI:57844"/>
        <dbReference type="ChEBI" id="CHEBI:58772"/>
        <dbReference type="EC" id="1.8.4.11"/>
    </reaction>
</comment>
<comment type="similarity">
    <text evidence="1">Belongs to the MsrA Met sulfoxide reductase family.</text>
</comment>